<accession>A6USF2</accession>
<proteinExistence type="inferred from homology"/>
<protein>
    <recommendedName>
        <fullName evidence="1">Adenine phosphoribosyltransferase</fullName>
        <shortName evidence="1">APRT</shortName>
        <ecNumber evidence="1">2.4.2.7</ecNumber>
    </recommendedName>
</protein>
<feature type="chain" id="PRO_0000329378" description="Adenine phosphoribosyltransferase">
    <location>
        <begin position="1"/>
        <end position="173"/>
    </location>
</feature>
<organism>
    <name type="scientific">Methanococcus vannielii (strain ATCC 35089 / DSM 1224 / JCM 13029 / OCM 148 / SB)</name>
    <dbReference type="NCBI Taxonomy" id="406327"/>
    <lineage>
        <taxon>Archaea</taxon>
        <taxon>Methanobacteriati</taxon>
        <taxon>Methanobacteriota</taxon>
        <taxon>Methanomada group</taxon>
        <taxon>Methanococci</taxon>
        <taxon>Methanococcales</taxon>
        <taxon>Methanococcaceae</taxon>
        <taxon>Methanococcus</taxon>
    </lineage>
</organism>
<name>APT_METVS</name>
<gene>
    <name evidence="1" type="primary">apt2</name>
    <name type="ordered locus">Mevan_1531</name>
</gene>
<sequence>MDLRKKIRIIDDFPKKGISFKDVTPILKDPKSMKHTTKEITKYLEDKNIDVIVGPEARGFLFGILVAQELDLGFVPVRKPGKLPFKTFSVDYALEYGLDRLEIHSDSIEKGQNVAVVDDLLATGGTVLGVTKLVEKIGGNVSALSFVIELTNLNGRDKLKGYNVQSLVKYDDL</sequence>
<dbReference type="EC" id="2.4.2.7" evidence="1"/>
<dbReference type="EMBL" id="CP000742">
    <property type="protein sequence ID" value="ABR55424.1"/>
    <property type="molecule type" value="Genomic_DNA"/>
</dbReference>
<dbReference type="RefSeq" id="WP_012066338.1">
    <property type="nucleotide sequence ID" value="NC_009634.1"/>
</dbReference>
<dbReference type="SMR" id="A6USF2"/>
<dbReference type="STRING" id="406327.Mevan_1531"/>
<dbReference type="GeneID" id="5325091"/>
<dbReference type="KEGG" id="mvn:Mevan_1531"/>
<dbReference type="eggNOG" id="arCOG00030">
    <property type="taxonomic scope" value="Archaea"/>
</dbReference>
<dbReference type="HOGENOM" id="CLU_063339_3_0_2"/>
<dbReference type="OrthoDB" id="8323at2157"/>
<dbReference type="UniPathway" id="UPA00588">
    <property type="reaction ID" value="UER00646"/>
</dbReference>
<dbReference type="Proteomes" id="UP000001107">
    <property type="component" value="Chromosome"/>
</dbReference>
<dbReference type="GO" id="GO:0005737">
    <property type="term" value="C:cytoplasm"/>
    <property type="evidence" value="ECO:0007669"/>
    <property type="project" value="UniProtKB-SubCell"/>
</dbReference>
<dbReference type="GO" id="GO:0002055">
    <property type="term" value="F:adenine binding"/>
    <property type="evidence" value="ECO:0007669"/>
    <property type="project" value="TreeGrafter"/>
</dbReference>
<dbReference type="GO" id="GO:0003999">
    <property type="term" value="F:adenine phosphoribosyltransferase activity"/>
    <property type="evidence" value="ECO:0007669"/>
    <property type="project" value="UniProtKB-UniRule"/>
</dbReference>
<dbReference type="GO" id="GO:0016208">
    <property type="term" value="F:AMP binding"/>
    <property type="evidence" value="ECO:0007669"/>
    <property type="project" value="TreeGrafter"/>
</dbReference>
<dbReference type="GO" id="GO:0006168">
    <property type="term" value="P:adenine salvage"/>
    <property type="evidence" value="ECO:0007669"/>
    <property type="project" value="InterPro"/>
</dbReference>
<dbReference type="GO" id="GO:0044209">
    <property type="term" value="P:AMP salvage"/>
    <property type="evidence" value="ECO:0007669"/>
    <property type="project" value="UniProtKB-UniRule"/>
</dbReference>
<dbReference type="GO" id="GO:0006166">
    <property type="term" value="P:purine ribonucleoside salvage"/>
    <property type="evidence" value="ECO:0007669"/>
    <property type="project" value="UniProtKB-KW"/>
</dbReference>
<dbReference type="CDD" id="cd06223">
    <property type="entry name" value="PRTases_typeI"/>
    <property type="match status" value="1"/>
</dbReference>
<dbReference type="FunFam" id="3.40.50.2020:FF:000004">
    <property type="entry name" value="Adenine phosphoribosyltransferase"/>
    <property type="match status" value="1"/>
</dbReference>
<dbReference type="Gene3D" id="3.40.50.2020">
    <property type="match status" value="1"/>
</dbReference>
<dbReference type="HAMAP" id="MF_00004">
    <property type="entry name" value="Aden_phosphoribosyltr"/>
    <property type="match status" value="1"/>
</dbReference>
<dbReference type="InterPro" id="IPR005764">
    <property type="entry name" value="Ade_phspho_trans"/>
</dbReference>
<dbReference type="InterPro" id="IPR000836">
    <property type="entry name" value="PRibTrfase_dom"/>
</dbReference>
<dbReference type="InterPro" id="IPR029057">
    <property type="entry name" value="PRTase-like"/>
</dbReference>
<dbReference type="InterPro" id="IPR050054">
    <property type="entry name" value="UPRTase/APRTase"/>
</dbReference>
<dbReference type="NCBIfam" id="TIGR01090">
    <property type="entry name" value="apt"/>
    <property type="match status" value="1"/>
</dbReference>
<dbReference type="NCBIfam" id="NF002633">
    <property type="entry name" value="PRK02304.1-2"/>
    <property type="match status" value="1"/>
</dbReference>
<dbReference type="NCBIfam" id="NF002634">
    <property type="entry name" value="PRK02304.1-3"/>
    <property type="match status" value="1"/>
</dbReference>
<dbReference type="NCBIfam" id="NF002636">
    <property type="entry name" value="PRK02304.1-5"/>
    <property type="match status" value="1"/>
</dbReference>
<dbReference type="NCBIfam" id="NF009211">
    <property type="entry name" value="PRK12560.1"/>
    <property type="match status" value="1"/>
</dbReference>
<dbReference type="PANTHER" id="PTHR32315">
    <property type="entry name" value="ADENINE PHOSPHORIBOSYLTRANSFERASE"/>
    <property type="match status" value="1"/>
</dbReference>
<dbReference type="PANTHER" id="PTHR32315:SF3">
    <property type="entry name" value="ADENINE PHOSPHORIBOSYLTRANSFERASE"/>
    <property type="match status" value="1"/>
</dbReference>
<dbReference type="Pfam" id="PF00156">
    <property type="entry name" value="Pribosyltran"/>
    <property type="match status" value="1"/>
</dbReference>
<dbReference type="SUPFAM" id="SSF53271">
    <property type="entry name" value="PRTase-like"/>
    <property type="match status" value="1"/>
</dbReference>
<evidence type="ECO:0000255" key="1">
    <source>
        <dbReference type="HAMAP-Rule" id="MF_00004"/>
    </source>
</evidence>
<reference key="1">
    <citation type="submission" date="2007-06" db="EMBL/GenBank/DDBJ databases">
        <title>Complete sequence of Methanococcus vannielii SB.</title>
        <authorList>
            <consortium name="US DOE Joint Genome Institute"/>
            <person name="Copeland A."/>
            <person name="Lucas S."/>
            <person name="Lapidus A."/>
            <person name="Barry K."/>
            <person name="Glavina del Rio T."/>
            <person name="Dalin E."/>
            <person name="Tice H."/>
            <person name="Pitluck S."/>
            <person name="Chain P."/>
            <person name="Malfatti S."/>
            <person name="Shin M."/>
            <person name="Vergez L."/>
            <person name="Schmutz J."/>
            <person name="Larimer F."/>
            <person name="Land M."/>
            <person name="Hauser L."/>
            <person name="Kyrpides N."/>
            <person name="Anderson I."/>
            <person name="Sieprawska-Lupa M."/>
            <person name="Whitman W.B."/>
            <person name="Richardson P."/>
        </authorList>
    </citation>
    <scope>NUCLEOTIDE SEQUENCE [LARGE SCALE GENOMIC DNA]</scope>
    <source>
        <strain>ATCC 35089 / DSM 1224 / JCM 13029 / OCM 148 / SB</strain>
    </source>
</reference>
<comment type="function">
    <text evidence="1">Catalyzes a salvage reaction resulting in the formation of AMP, that is energically less costly than de novo synthesis.</text>
</comment>
<comment type="catalytic activity">
    <reaction evidence="1">
        <text>AMP + diphosphate = 5-phospho-alpha-D-ribose 1-diphosphate + adenine</text>
        <dbReference type="Rhea" id="RHEA:16609"/>
        <dbReference type="ChEBI" id="CHEBI:16708"/>
        <dbReference type="ChEBI" id="CHEBI:33019"/>
        <dbReference type="ChEBI" id="CHEBI:58017"/>
        <dbReference type="ChEBI" id="CHEBI:456215"/>
        <dbReference type="EC" id="2.4.2.7"/>
    </reaction>
</comment>
<comment type="pathway">
    <text evidence="1">Purine metabolism; AMP biosynthesis via salvage pathway; AMP from adenine: step 1/1.</text>
</comment>
<comment type="subunit">
    <text evidence="1">Homodimer.</text>
</comment>
<comment type="subcellular location">
    <subcellularLocation>
        <location evidence="1">Cytoplasm</location>
    </subcellularLocation>
</comment>
<comment type="similarity">
    <text evidence="1">Belongs to the purine/pyrimidine phosphoribosyltransferase family.</text>
</comment>
<keyword id="KW-0963">Cytoplasm</keyword>
<keyword id="KW-0328">Glycosyltransferase</keyword>
<keyword id="KW-0660">Purine salvage</keyword>
<keyword id="KW-0808">Transferase</keyword>